<reference key="1">
    <citation type="submission" date="2006-12" db="EMBL/GenBank/DDBJ databases">
        <title>Complete sequence of Shewanella amazonensis SB2B.</title>
        <authorList>
            <consortium name="US DOE Joint Genome Institute"/>
            <person name="Copeland A."/>
            <person name="Lucas S."/>
            <person name="Lapidus A."/>
            <person name="Barry K."/>
            <person name="Detter J.C."/>
            <person name="Glavina del Rio T."/>
            <person name="Hammon N."/>
            <person name="Israni S."/>
            <person name="Dalin E."/>
            <person name="Tice H."/>
            <person name="Pitluck S."/>
            <person name="Munk A.C."/>
            <person name="Brettin T."/>
            <person name="Bruce D."/>
            <person name="Han C."/>
            <person name="Tapia R."/>
            <person name="Gilna P."/>
            <person name="Schmutz J."/>
            <person name="Larimer F."/>
            <person name="Land M."/>
            <person name="Hauser L."/>
            <person name="Kyrpides N."/>
            <person name="Mikhailova N."/>
            <person name="Fredrickson J."/>
            <person name="Richardson P."/>
        </authorList>
    </citation>
    <scope>NUCLEOTIDE SEQUENCE [LARGE SCALE GENOMIC DNA]</scope>
    <source>
        <strain>ATCC BAA-1098 / SB2B</strain>
    </source>
</reference>
<sequence length="92" mass="10041">MARVTVEDAVKQIGNRFDMILVAARRARQIAVQGKDPMVEEQNDKPTVIALREIEKGLVNAGTLDADERQSVREREAAEIAAVAAIAEGRSL</sequence>
<proteinExistence type="inferred from homology"/>
<protein>
    <recommendedName>
        <fullName evidence="1">DNA-directed RNA polymerase subunit omega</fullName>
        <shortName evidence="1">RNAP omega subunit</shortName>
        <ecNumber evidence="1">2.7.7.6</ecNumber>
    </recommendedName>
    <alternativeName>
        <fullName evidence="1">RNA polymerase omega subunit</fullName>
    </alternativeName>
    <alternativeName>
        <fullName evidence="1">Transcriptase subunit omega</fullName>
    </alternativeName>
</protein>
<accession>A1S270</accession>
<keyword id="KW-0240">DNA-directed RNA polymerase</keyword>
<keyword id="KW-0548">Nucleotidyltransferase</keyword>
<keyword id="KW-1185">Reference proteome</keyword>
<keyword id="KW-0804">Transcription</keyword>
<keyword id="KW-0808">Transferase</keyword>
<organism>
    <name type="scientific">Shewanella amazonensis (strain ATCC BAA-1098 / SB2B)</name>
    <dbReference type="NCBI Taxonomy" id="326297"/>
    <lineage>
        <taxon>Bacteria</taxon>
        <taxon>Pseudomonadati</taxon>
        <taxon>Pseudomonadota</taxon>
        <taxon>Gammaproteobacteria</taxon>
        <taxon>Alteromonadales</taxon>
        <taxon>Shewanellaceae</taxon>
        <taxon>Shewanella</taxon>
    </lineage>
</organism>
<dbReference type="EC" id="2.7.7.6" evidence="1"/>
<dbReference type="EMBL" id="CP000507">
    <property type="protein sequence ID" value="ABL98476.1"/>
    <property type="molecule type" value="Genomic_DNA"/>
</dbReference>
<dbReference type="RefSeq" id="WP_011758386.1">
    <property type="nucleotide sequence ID" value="NC_008700.1"/>
</dbReference>
<dbReference type="SMR" id="A1S270"/>
<dbReference type="STRING" id="326297.Sama_0265"/>
<dbReference type="KEGG" id="saz:Sama_0265"/>
<dbReference type="eggNOG" id="COG1758">
    <property type="taxonomic scope" value="Bacteria"/>
</dbReference>
<dbReference type="HOGENOM" id="CLU_125406_5_3_6"/>
<dbReference type="OrthoDB" id="9796300at2"/>
<dbReference type="Proteomes" id="UP000009175">
    <property type="component" value="Chromosome"/>
</dbReference>
<dbReference type="GO" id="GO:0000428">
    <property type="term" value="C:DNA-directed RNA polymerase complex"/>
    <property type="evidence" value="ECO:0007669"/>
    <property type="project" value="UniProtKB-KW"/>
</dbReference>
<dbReference type="GO" id="GO:0003677">
    <property type="term" value="F:DNA binding"/>
    <property type="evidence" value="ECO:0007669"/>
    <property type="project" value="UniProtKB-UniRule"/>
</dbReference>
<dbReference type="GO" id="GO:0003899">
    <property type="term" value="F:DNA-directed RNA polymerase activity"/>
    <property type="evidence" value="ECO:0007669"/>
    <property type="project" value="UniProtKB-UniRule"/>
</dbReference>
<dbReference type="GO" id="GO:0006351">
    <property type="term" value="P:DNA-templated transcription"/>
    <property type="evidence" value="ECO:0007669"/>
    <property type="project" value="UniProtKB-UniRule"/>
</dbReference>
<dbReference type="Gene3D" id="3.90.940.10">
    <property type="match status" value="1"/>
</dbReference>
<dbReference type="HAMAP" id="MF_00366">
    <property type="entry name" value="RNApol_bact_RpoZ"/>
    <property type="match status" value="1"/>
</dbReference>
<dbReference type="InterPro" id="IPR003716">
    <property type="entry name" value="DNA-dir_RNA_pol_omega"/>
</dbReference>
<dbReference type="InterPro" id="IPR006110">
    <property type="entry name" value="Pol_omega/Rpo6/RPB6"/>
</dbReference>
<dbReference type="InterPro" id="IPR036161">
    <property type="entry name" value="RPB6/omega-like_sf"/>
</dbReference>
<dbReference type="NCBIfam" id="TIGR00690">
    <property type="entry name" value="rpoZ"/>
    <property type="match status" value="1"/>
</dbReference>
<dbReference type="PANTHER" id="PTHR34476">
    <property type="entry name" value="DNA-DIRECTED RNA POLYMERASE SUBUNIT OMEGA"/>
    <property type="match status" value="1"/>
</dbReference>
<dbReference type="PANTHER" id="PTHR34476:SF1">
    <property type="entry name" value="DNA-DIRECTED RNA POLYMERASE SUBUNIT OMEGA"/>
    <property type="match status" value="1"/>
</dbReference>
<dbReference type="Pfam" id="PF01192">
    <property type="entry name" value="RNA_pol_Rpb6"/>
    <property type="match status" value="1"/>
</dbReference>
<dbReference type="SMART" id="SM01409">
    <property type="entry name" value="RNA_pol_Rpb6"/>
    <property type="match status" value="1"/>
</dbReference>
<dbReference type="SUPFAM" id="SSF63562">
    <property type="entry name" value="RPB6/omega subunit-like"/>
    <property type="match status" value="1"/>
</dbReference>
<name>RPOZ_SHEAM</name>
<evidence type="ECO:0000255" key="1">
    <source>
        <dbReference type="HAMAP-Rule" id="MF_00366"/>
    </source>
</evidence>
<comment type="function">
    <text evidence="1">Promotes RNA polymerase assembly. Latches the N- and C-terminal regions of the beta' subunit thereby facilitating its interaction with the beta and alpha subunits.</text>
</comment>
<comment type="catalytic activity">
    <reaction evidence="1">
        <text>RNA(n) + a ribonucleoside 5'-triphosphate = RNA(n+1) + diphosphate</text>
        <dbReference type="Rhea" id="RHEA:21248"/>
        <dbReference type="Rhea" id="RHEA-COMP:14527"/>
        <dbReference type="Rhea" id="RHEA-COMP:17342"/>
        <dbReference type="ChEBI" id="CHEBI:33019"/>
        <dbReference type="ChEBI" id="CHEBI:61557"/>
        <dbReference type="ChEBI" id="CHEBI:140395"/>
        <dbReference type="EC" id="2.7.7.6"/>
    </reaction>
</comment>
<comment type="subunit">
    <text evidence="1">The RNAP catalytic core consists of 2 alpha, 1 beta, 1 beta' and 1 omega subunit. When a sigma factor is associated with the core the holoenzyme is formed, which can initiate transcription.</text>
</comment>
<comment type="similarity">
    <text evidence="1">Belongs to the RNA polymerase subunit omega family.</text>
</comment>
<gene>
    <name evidence="1" type="primary">rpoZ</name>
    <name type="ordered locus">Sama_0265</name>
</gene>
<feature type="chain" id="PRO_1000006006" description="DNA-directed RNA polymerase subunit omega">
    <location>
        <begin position="1"/>
        <end position="92"/>
    </location>
</feature>